<accession>Q4ZRJ1</accession>
<evidence type="ECO:0000255" key="1">
    <source>
        <dbReference type="HAMAP-Rule" id="MF_01359"/>
    </source>
</evidence>
<comment type="function">
    <text evidence="1">NDH-1 shuttles electrons from NADH, via FMN and iron-sulfur (Fe-S) centers, to quinones in the respiratory chain. The immediate electron acceptor for the enzyme in this species is believed to be ubiquinone. Couples the redox reaction to proton translocation (for every two electrons transferred, four hydrogen ions are translocated across the cytoplasmic membrane), and thus conserves the redox energy in a proton gradient.</text>
</comment>
<comment type="catalytic activity">
    <reaction evidence="1">
        <text>a quinone + NADH + 5 H(+)(in) = a quinol + NAD(+) + 4 H(+)(out)</text>
        <dbReference type="Rhea" id="RHEA:57888"/>
        <dbReference type="ChEBI" id="CHEBI:15378"/>
        <dbReference type="ChEBI" id="CHEBI:24646"/>
        <dbReference type="ChEBI" id="CHEBI:57540"/>
        <dbReference type="ChEBI" id="CHEBI:57945"/>
        <dbReference type="ChEBI" id="CHEBI:132124"/>
    </reaction>
</comment>
<comment type="subunit">
    <text evidence="1">NDH-1 is composed of 13 different subunits. Subunits NuoB, CD, E, F, and G constitute the peripheral sector of the complex.</text>
</comment>
<comment type="subcellular location">
    <subcellularLocation>
        <location evidence="1">Cell inner membrane</location>
        <topology evidence="1">Peripheral membrane protein</topology>
        <orientation evidence="1">Cytoplasmic side</orientation>
    </subcellularLocation>
</comment>
<comment type="similarity">
    <text evidence="1">In the N-terminal section; belongs to the complex I 30 kDa subunit family.</text>
</comment>
<comment type="similarity">
    <text evidence="1">In the C-terminal section; belongs to the complex I 49 kDa subunit family.</text>
</comment>
<dbReference type="EC" id="7.1.1.-" evidence="1"/>
<dbReference type="EMBL" id="CP000075">
    <property type="protein sequence ID" value="AAY38231.1"/>
    <property type="molecule type" value="Genomic_DNA"/>
</dbReference>
<dbReference type="RefSeq" id="WP_011268276.1">
    <property type="nucleotide sequence ID" value="NC_007005.1"/>
</dbReference>
<dbReference type="RefSeq" id="YP_236269.1">
    <property type="nucleotide sequence ID" value="NC_007005.1"/>
</dbReference>
<dbReference type="SMR" id="Q4ZRJ1"/>
<dbReference type="STRING" id="205918.Psyr_3199"/>
<dbReference type="KEGG" id="psb:Psyr_3199"/>
<dbReference type="PATRIC" id="fig|205918.7.peg.3266"/>
<dbReference type="eggNOG" id="COG0649">
    <property type="taxonomic scope" value="Bacteria"/>
</dbReference>
<dbReference type="eggNOG" id="COG0852">
    <property type="taxonomic scope" value="Bacteria"/>
</dbReference>
<dbReference type="HOGENOM" id="CLU_015134_3_2_6"/>
<dbReference type="OrthoDB" id="9801496at2"/>
<dbReference type="Proteomes" id="UP000000426">
    <property type="component" value="Chromosome"/>
</dbReference>
<dbReference type="GO" id="GO:0030964">
    <property type="term" value="C:NADH dehydrogenase complex"/>
    <property type="evidence" value="ECO:0007669"/>
    <property type="project" value="InterPro"/>
</dbReference>
<dbReference type="GO" id="GO:0005886">
    <property type="term" value="C:plasma membrane"/>
    <property type="evidence" value="ECO:0007669"/>
    <property type="project" value="UniProtKB-SubCell"/>
</dbReference>
<dbReference type="GO" id="GO:0051287">
    <property type="term" value="F:NAD binding"/>
    <property type="evidence" value="ECO:0007669"/>
    <property type="project" value="InterPro"/>
</dbReference>
<dbReference type="GO" id="GO:0008137">
    <property type="term" value="F:NADH dehydrogenase (ubiquinone) activity"/>
    <property type="evidence" value="ECO:0007669"/>
    <property type="project" value="InterPro"/>
</dbReference>
<dbReference type="GO" id="GO:0050136">
    <property type="term" value="F:NADH:ubiquinone reductase (non-electrogenic) activity"/>
    <property type="evidence" value="ECO:0007669"/>
    <property type="project" value="UniProtKB-UniRule"/>
</dbReference>
<dbReference type="GO" id="GO:0048038">
    <property type="term" value="F:quinone binding"/>
    <property type="evidence" value="ECO:0007669"/>
    <property type="project" value="UniProtKB-KW"/>
</dbReference>
<dbReference type="FunFam" id="1.10.645.10:FF:000001">
    <property type="entry name" value="NADH-quinone oxidoreductase subunit C/D"/>
    <property type="match status" value="1"/>
</dbReference>
<dbReference type="FunFam" id="3.30.460.80:FF:000001">
    <property type="entry name" value="NADH-quinone oxidoreductase subunit C/D"/>
    <property type="match status" value="1"/>
</dbReference>
<dbReference type="Gene3D" id="1.10.645.10">
    <property type="entry name" value="Cytochrome-c3 Hydrogenase, chain B"/>
    <property type="match status" value="1"/>
</dbReference>
<dbReference type="Gene3D" id="3.30.460.80">
    <property type="entry name" value="NADH:ubiquinone oxidoreductase, 30kDa subunit"/>
    <property type="match status" value="1"/>
</dbReference>
<dbReference type="HAMAP" id="MF_01357">
    <property type="entry name" value="NDH1_NuoC"/>
    <property type="match status" value="1"/>
</dbReference>
<dbReference type="HAMAP" id="MF_01359">
    <property type="entry name" value="NDH1_NuoCD_1"/>
    <property type="match status" value="1"/>
</dbReference>
<dbReference type="HAMAP" id="MF_01358">
    <property type="entry name" value="NDH1_NuoD"/>
    <property type="match status" value="1"/>
</dbReference>
<dbReference type="InterPro" id="IPR010218">
    <property type="entry name" value="NADH_DH_suC"/>
</dbReference>
<dbReference type="InterPro" id="IPR023062">
    <property type="entry name" value="NADH_DH_suCD"/>
</dbReference>
<dbReference type="InterPro" id="IPR001135">
    <property type="entry name" value="NADH_Q_OxRdtase_suD"/>
</dbReference>
<dbReference type="InterPro" id="IPR037232">
    <property type="entry name" value="NADH_quin_OxRdtase_su_C/D-like"/>
</dbReference>
<dbReference type="InterPro" id="IPR001268">
    <property type="entry name" value="NADH_UbQ_OxRdtase_30kDa_su"/>
</dbReference>
<dbReference type="InterPro" id="IPR014029">
    <property type="entry name" value="NADH_UbQ_OxRdtase_49kDa_CS"/>
</dbReference>
<dbReference type="InterPro" id="IPR022885">
    <property type="entry name" value="NDH1_su_D/H"/>
</dbReference>
<dbReference type="InterPro" id="IPR029014">
    <property type="entry name" value="NiFe-Hase_large"/>
</dbReference>
<dbReference type="NCBIfam" id="TIGR01961">
    <property type="entry name" value="NuoC_fam"/>
    <property type="match status" value="1"/>
</dbReference>
<dbReference type="NCBIfam" id="TIGR01962">
    <property type="entry name" value="NuoD"/>
    <property type="match status" value="1"/>
</dbReference>
<dbReference type="NCBIfam" id="NF004739">
    <property type="entry name" value="PRK06075.1"/>
    <property type="match status" value="1"/>
</dbReference>
<dbReference type="NCBIfam" id="NF008728">
    <property type="entry name" value="PRK11742.1"/>
    <property type="match status" value="1"/>
</dbReference>
<dbReference type="PANTHER" id="PTHR11993:SF45">
    <property type="entry name" value="NADH-QUINONE OXIDOREDUCTASE SUBUNIT C_D"/>
    <property type="match status" value="1"/>
</dbReference>
<dbReference type="PANTHER" id="PTHR11993">
    <property type="entry name" value="NADH-UBIQUINONE OXIDOREDUCTASE 49 KDA SUBUNIT"/>
    <property type="match status" value="1"/>
</dbReference>
<dbReference type="Pfam" id="PF00329">
    <property type="entry name" value="Complex1_30kDa"/>
    <property type="match status" value="1"/>
</dbReference>
<dbReference type="Pfam" id="PF00346">
    <property type="entry name" value="Complex1_49kDa"/>
    <property type="match status" value="1"/>
</dbReference>
<dbReference type="SUPFAM" id="SSF56762">
    <property type="entry name" value="HydB/Nqo4-like"/>
    <property type="match status" value="1"/>
</dbReference>
<dbReference type="SUPFAM" id="SSF143243">
    <property type="entry name" value="Nqo5-like"/>
    <property type="match status" value="1"/>
</dbReference>
<dbReference type="PROSITE" id="PS00535">
    <property type="entry name" value="COMPLEX1_49K"/>
    <property type="match status" value="1"/>
</dbReference>
<protein>
    <recommendedName>
        <fullName evidence="1">NADH-quinone oxidoreductase subunit C/D</fullName>
        <ecNumber evidence="1">7.1.1.-</ecNumber>
    </recommendedName>
    <alternativeName>
        <fullName evidence="1">NADH dehydrogenase I subunit C/D</fullName>
    </alternativeName>
    <alternativeName>
        <fullName evidence="1">NDH-1 subunit C/D</fullName>
    </alternativeName>
</protein>
<proteinExistence type="inferred from homology"/>
<reference key="1">
    <citation type="journal article" date="2005" name="Proc. Natl. Acad. Sci. U.S.A.">
        <title>Comparison of the complete genome sequences of Pseudomonas syringae pv. syringae B728a and pv. tomato DC3000.</title>
        <authorList>
            <person name="Feil H."/>
            <person name="Feil W.S."/>
            <person name="Chain P."/>
            <person name="Larimer F."/>
            <person name="Dibartolo G."/>
            <person name="Copeland A."/>
            <person name="Lykidis A."/>
            <person name="Trong S."/>
            <person name="Nolan M."/>
            <person name="Goltsman E."/>
            <person name="Thiel J."/>
            <person name="Malfatti S."/>
            <person name="Loper J.E."/>
            <person name="Lapidus A."/>
            <person name="Detter J.C."/>
            <person name="Land M."/>
            <person name="Richardson P.M."/>
            <person name="Kyrpides N.C."/>
            <person name="Ivanova N."/>
            <person name="Lindow S.E."/>
        </authorList>
    </citation>
    <scope>NUCLEOTIDE SEQUENCE [LARGE SCALE GENOMIC DNA]</scope>
    <source>
        <strain>B728a</strain>
    </source>
</reference>
<organism>
    <name type="scientific">Pseudomonas syringae pv. syringae (strain B728a)</name>
    <dbReference type="NCBI Taxonomy" id="205918"/>
    <lineage>
        <taxon>Bacteria</taxon>
        <taxon>Pseudomonadati</taxon>
        <taxon>Pseudomonadota</taxon>
        <taxon>Gammaproteobacteria</taxon>
        <taxon>Pseudomonadales</taxon>
        <taxon>Pseudomonadaceae</taxon>
        <taxon>Pseudomonas</taxon>
        <taxon>Pseudomonas syringae</taxon>
    </lineage>
</organism>
<name>NUOCD_PSEU2</name>
<keyword id="KW-0997">Cell inner membrane</keyword>
<keyword id="KW-1003">Cell membrane</keyword>
<keyword id="KW-0472">Membrane</keyword>
<keyword id="KW-0511">Multifunctional enzyme</keyword>
<keyword id="KW-0520">NAD</keyword>
<keyword id="KW-0874">Quinone</keyword>
<keyword id="KW-1278">Translocase</keyword>
<keyword id="KW-0813">Transport</keyword>
<keyword id="KW-0830">Ubiquinone</keyword>
<feature type="chain" id="PRO_0000358666" description="NADH-quinone oxidoreductase subunit C/D">
    <location>
        <begin position="1"/>
        <end position="593"/>
    </location>
</feature>
<feature type="region of interest" description="NADH dehydrogenase I subunit C" evidence="1">
    <location>
        <begin position="1"/>
        <end position="184"/>
    </location>
</feature>
<feature type="region of interest" description="NADH dehydrogenase I subunit D" evidence="1">
    <location>
        <begin position="208"/>
        <end position="593"/>
    </location>
</feature>
<gene>
    <name evidence="1" type="primary">nuoC</name>
    <name evidence="1" type="synonym">nuoCD</name>
    <name evidence="1" type="synonym">nuoD</name>
    <name type="ordered locus">Psyr_3199</name>
</gene>
<sequence>MTADNALYIPPYKADDQDVVVELNNRFGAEAFTAQPTRTGMPVLWVERARLFEILTFLRNVPKPYSMLYDLHGVDERLRTNRRGLPGADFTVFYHLLSIERNSDVMIKVALSESDLSVPTITSIWPNANWYEREVWDMFGIDFPGHPHLSRIMMPPTWEGHPLRKDFPARATEFDPYSLTLAKQQLEEEAARFRPEDWGMKRSGANEDYMFLNLGPNHPSAHGAFRIILQLDGEEIVDCVPDIGYHHRGAEKMAERQSWHSFIPYTDRIDYLGGVMNNLPYVLSVEKLAGIKVPEKVDVIRIMMAEFFRITSHLLFLGTYIQDVGAMTPVFFTFTDRQKAYTVIEAITGFRLHPAWYRIGGVAHDLPRGWEKLVKDFVDWLPKRLDEYTKAALQNSILKGRTIGVAAYNTKEALEWGVTGAGLRSTGCDFDLRKARPYSGYENFEFEVPLAANGDAYDRCMVRVEEMRQSIKIIDQCMRNMPEGPYKADHPLTTPPPKERTLQHIETLITHFLQVSWGPVMPANESFQMIEATKGINSYYLTSDGGTMSYRTRIRTPSYPHLQQIPSVIKGSMVADLIAYLGSIDFVMADVDR</sequence>